<feature type="chain" id="PRO_0000091818" description="Forkhead box protein D3">
    <location>
        <begin position="1"/>
        <end position="465"/>
    </location>
</feature>
<feature type="DNA-binding region" description="Fork-head" evidence="2">
    <location>
        <begin position="130"/>
        <end position="221"/>
    </location>
</feature>
<feature type="region of interest" description="Disordered" evidence="3">
    <location>
        <begin position="1"/>
        <end position="127"/>
    </location>
</feature>
<feature type="region of interest" description="Disordered" evidence="3">
    <location>
        <begin position="375"/>
        <end position="405"/>
    </location>
</feature>
<feature type="compositionally biased region" description="Polar residues" evidence="3">
    <location>
        <begin position="1"/>
        <end position="18"/>
    </location>
</feature>
<feature type="compositionally biased region" description="Acidic residues" evidence="3">
    <location>
        <begin position="21"/>
        <end position="39"/>
    </location>
</feature>
<feature type="compositionally biased region" description="Gly residues" evidence="3">
    <location>
        <begin position="105"/>
        <end position="118"/>
    </location>
</feature>
<feature type="compositionally biased region" description="Gly residues" evidence="3">
    <location>
        <begin position="377"/>
        <end position="400"/>
    </location>
</feature>
<sequence length="465" mass="46345">MTLSGSGSASDMSGQTVLTAEDVDIDVVGEGDDGLEEKDSDAGCDSPAGPPDLRLDEADEGPPVSAHHGQSQPQALALPTEATGPGNDTGAPEADGCKGGEDAVTGGGGPGAGSGATGGLTPNKPKNSLVKPPYSYIALITMAILQSPQKKLTLSGICEFISNRFPYYREKFPAWQNSIRHNLSLNDCFVKIPREPGNPGKGNYWTLDPQSEDMFDNGSFLRRRKRFKRHQQEHLREQTALMMQSFGAYSLAAAAGAGPYGLHPAAAAGAYSHPAAAAAAAAAAALQYPYALPPVAPVLPPAVPLLPSGELGRKAAAFGSQLGPSLQLQLNTLGAAAAAAGTAGAAGTTSLIKSEPSARPSFSIENIIGAGSAAPGGSAGGGGSGGGAGGGGGSGGGGGAQSFLRPPGTVQSAALMATHQPLSLSRTTATIAPILSVPLSGQFLQPAASAAAAAAAAVQAKWPAQ</sequence>
<evidence type="ECO:0000250" key="1">
    <source>
        <dbReference type="UniProtKB" id="Q9UJU5"/>
    </source>
</evidence>
<evidence type="ECO:0000255" key="2">
    <source>
        <dbReference type="PROSITE-ProRule" id="PRU00089"/>
    </source>
</evidence>
<evidence type="ECO:0000256" key="3">
    <source>
        <dbReference type="SAM" id="MobiDB-lite"/>
    </source>
</evidence>
<evidence type="ECO:0000269" key="4">
    <source>
    </source>
</evidence>
<evidence type="ECO:0000269" key="5">
    <source>
    </source>
</evidence>
<evidence type="ECO:0000269" key="6">
    <source>
    </source>
</evidence>
<evidence type="ECO:0000269" key="7">
    <source>
    </source>
</evidence>
<evidence type="ECO:0000305" key="8"/>
<accession>Q61060</accession>
<name>FOXD3_MOUSE</name>
<dbReference type="EMBL" id="U41047">
    <property type="protein sequence ID" value="AAA87569.1"/>
    <property type="status" value="ALT_FRAME"/>
    <property type="molecule type" value="mRNA"/>
</dbReference>
<dbReference type="EMBL" id="AF067421">
    <property type="protein sequence ID" value="AAC28352.2"/>
    <property type="molecule type" value="mRNA"/>
</dbReference>
<dbReference type="EMBL" id="BX005053">
    <property type="status" value="NOT_ANNOTATED_CDS"/>
    <property type="molecule type" value="Genomic_DNA"/>
</dbReference>
<dbReference type="RefSeq" id="NP_034555.3">
    <property type="nucleotide sequence ID" value="NM_010425.3"/>
</dbReference>
<dbReference type="SMR" id="Q61060"/>
<dbReference type="BioGRID" id="200288">
    <property type="interactions" value="1"/>
</dbReference>
<dbReference type="FunCoup" id="Q61060">
    <property type="interactions" value="247"/>
</dbReference>
<dbReference type="STRING" id="10090.ENSMUSP00000084541"/>
<dbReference type="GlyGen" id="Q61060">
    <property type="glycosylation" value="1 site, 1 O-linked glycan (1 site)"/>
</dbReference>
<dbReference type="PhosphoSitePlus" id="Q61060"/>
<dbReference type="PaxDb" id="10090-ENSMUSP00000084541"/>
<dbReference type="ProteomicsDB" id="271592"/>
<dbReference type="DNASU" id="15221"/>
<dbReference type="GeneID" id="15221"/>
<dbReference type="KEGG" id="mmu:15221"/>
<dbReference type="AGR" id="MGI:1347473"/>
<dbReference type="CTD" id="27022"/>
<dbReference type="MGI" id="MGI:1347473">
    <property type="gene designation" value="Foxd3"/>
</dbReference>
<dbReference type="eggNOG" id="KOG2294">
    <property type="taxonomic scope" value="Eukaryota"/>
</dbReference>
<dbReference type="InParanoid" id="Q61060"/>
<dbReference type="OrthoDB" id="5402974at2759"/>
<dbReference type="BioGRID-ORCS" id="15221">
    <property type="hits" value="5 hits in 79 CRISPR screens"/>
</dbReference>
<dbReference type="ChiTaRS" id="Foxd3">
    <property type="organism name" value="mouse"/>
</dbReference>
<dbReference type="PRO" id="PR:Q61060"/>
<dbReference type="Proteomes" id="UP000000589">
    <property type="component" value="Unplaced"/>
</dbReference>
<dbReference type="RNAct" id="Q61060">
    <property type="molecule type" value="protein"/>
</dbReference>
<dbReference type="GO" id="GO:0005634">
    <property type="term" value="C:nucleus"/>
    <property type="evidence" value="ECO:0000305"/>
    <property type="project" value="UniProtKB"/>
</dbReference>
<dbReference type="GO" id="GO:0005667">
    <property type="term" value="C:transcription regulator complex"/>
    <property type="evidence" value="ECO:0000304"/>
    <property type="project" value="MGI"/>
</dbReference>
<dbReference type="GO" id="GO:0003700">
    <property type="term" value="F:DNA-binding transcription factor activity"/>
    <property type="evidence" value="ECO:0000314"/>
    <property type="project" value="UniProtKB"/>
</dbReference>
<dbReference type="GO" id="GO:0000976">
    <property type="term" value="F:transcription cis-regulatory region binding"/>
    <property type="evidence" value="ECO:0000314"/>
    <property type="project" value="MGI"/>
</dbReference>
<dbReference type="GO" id="GO:1990830">
    <property type="term" value="P:cellular response to leukemia inhibitory factor"/>
    <property type="evidence" value="ECO:0000270"/>
    <property type="project" value="MGI"/>
</dbReference>
<dbReference type="GO" id="GO:0006351">
    <property type="term" value="P:DNA-templated transcription"/>
    <property type="evidence" value="ECO:0000304"/>
    <property type="project" value="MGI"/>
</dbReference>
<dbReference type="GO" id="GO:0001892">
    <property type="term" value="P:embryonic placenta development"/>
    <property type="evidence" value="ECO:0000315"/>
    <property type="project" value="MGI"/>
</dbReference>
<dbReference type="GO" id="GO:0001701">
    <property type="term" value="P:in utero embryonic development"/>
    <property type="evidence" value="ECO:0000314"/>
    <property type="project" value="UniProtKB"/>
</dbReference>
<dbReference type="GO" id="GO:0000122">
    <property type="term" value="P:negative regulation of transcription by RNA polymerase II"/>
    <property type="evidence" value="ECO:0000314"/>
    <property type="project" value="UniProtKB"/>
</dbReference>
<dbReference type="GO" id="GO:0045944">
    <property type="term" value="P:positive regulation of transcription by RNA polymerase II"/>
    <property type="evidence" value="ECO:0000250"/>
    <property type="project" value="UniProtKB"/>
</dbReference>
<dbReference type="GO" id="GO:0001829">
    <property type="term" value="P:trophectodermal cell differentiation"/>
    <property type="evidence" value="ECO:0000315"/>
    <property type="project" value="MGI"/>
</dbReference>
<dbReference type="CDD" id="cd20047">
    <property type="entry name" value="FH_FOXD3"/>
    <property type="match status" value="1"/>
</dbReference>
<dbReference type="FunFam" id="1.10.10.10:FF:000016">
    <property type="entry name" value="Forkhead box protein I1"/>
    <property type="match status" value="1"/>
</dbReference>
<dbReference type="Gene3D" id="1.10.10.10">
    <property type="entry name" value="Winged helix-like DNA-binding domain superfamily/Winged helix DNA-binding domain"/>
    <property type="match status" value="1"/>
</dbReference>
<dbReference type="InterPro" id="IPR047392">
    <property type="entry name" value="FH_FOXD3"/>
</dbReference>
<dbReference type="InterPro" id="IPR001766">
    <property type="entry name" value="Fork_head_dom"/>
</dbReference>
<dbReference type="InterPro" id="IPR050211">
    <property type="entry name" value="FOX_domain-containing"/>
</dbReference>
<dbReference type="InterPro" id="IPR018122">
    <property type="entry name" value="TF_fork_head_CS_1"/>
</dbReference>
<dbReference type="InterPro" id="IPR030456">
    <property type="entry name" value="TF_fork_head_CS_2"/>
</dbReference>
<dbReference type="InterPro" id="IPR036388">
    <property type="entry name" value="WH-like_DNA-bd_sf"/>
</dbReference>
<dbReference type="InterPro" id="IPR036390">
    <property type="entry name" value="WH_DNA-bd_sf"/>
</dbReference>
<dbReference type="PANTHER" id="PTHR11829">
    <property type="entry name" value="FORKHEAD BOX PROTEIN"/>
    <property type="match status" value="1"/>
</dbReference>
<dbReference type="PANTHER" id="PTHR11829:SF405">
    <property type="entry name" value="FORKHEAD BOX PROTEIN D3"/>
    <property type="match status" value="1"/>
</dbReference>
<dbReference type="Pfam" id="PF00250">
    <property type="entry name" value="Forkhead"/>
    <property type="match status" value="1"/>
</dbReference>
<dbReference type="PRINTS" id="PR00053">
    <property type="entry name" value="FORKHEAD"/>
</dbReference>
<dbReference type="SMART" id="SM00339">
    <property type="entry name" value="FH"/>
    <property type="match status" value="1"/>
</dbReference>
<dbReference type="SUPFAM" id="SSF46785">
    <property type="entry name" value="Winged helix' DNA-binding domain"/>
    <property type="match status" value="1"/>
</dbReference>
<dbReference type="PROSITE" id="PS00657">
    <property type="entry name" value="FORK_HEAD_1"/>
    <property type="match status" value="1"/>
</dbReference>
<dbReference type="PROSITE" id="PS00658">
    <property type="entry name" value="FORK_HEAD_2"/>
    <property type="match status" value="1"/>
</dbReference>
<dbReference type="PROSITE" id="PS50039">
    <property type="entry name" value="FORK_HEAD_3"/>
    <property type="match status" value="1"/>
</dbReference>
<gene>
    <name type="primary">Foxd3</name>
    <name type="synonym">Hfh2</name>
</gene>
<organism>
    <name type="scientific">Mus musculus</name>
    <name type="common">Mouse</name>
    <dbReference type="NCBI Taxonomy" id="10090"/>
    <lineage>
        <taxon>Eukaryota</taxon>
        <taxon>Metazoa</taxon>
        <taxon>Chordata</taxon>
        <taxon>Craniata</taxon>
        <taxon>Vertebrata</taxon>
        <taxon>Euteleostomi</taxon>
        <taxon>Mammalia</taxon>
        <taxon>Eutheria</taxon>
        <taxon>Euarchontoglires</taxon>
        <taxon>Glires</taxon>
        <taxon>Rodentia</taxon>
        <taxon>Myomorpha</taxon>
        <taxon>Muroidea</taxon>
        <taxon>Muridae</taxon>
        <taxon>Murinae</taxon>
        <taxon>Mus</taxon>
        <taxon>Mus</taxon>
    </lineage>
</organism>
<reference key="1">
    <citation type="journal article" date="1996" name="J. Biol. Chem.">
        <title>Genesis, a winged helix transcriptional repressor with expression restricted to embryonic stem cells.</title>
        <authorList>
            <person name="Sutton J."/>
            <person name="Costa R."/>
            <person name="Klug M."/>
            <person name="Field L."/>
            <person name="Xu D."/>
            <person name="Largaespada D.A."/>
            <person name="Fletcher C.F."/>
            <person name="Jenkins N.A."/>
            <person name="Copeland N.G."/>
            <person name="Klemsz M."/>
            <person name="Hromas R."/>
        </authorList>
    </citation>
    <scope>NUCLEOTIDE SEQUENCE [MRNA]</scope>
    <scope>FUNCTION</scope>
    <source>
        <tissue>Embryonic carcinoma</tissue>
    </source>
</reference>
<reference key="2">
    <citation type="journal article" date="1998" name="Mech. Dev.">
        <title>The winged helix transcription factor Hfh2 is expressed in neural crest and spinal cord during mouse development.</title>
        <authorList>
            <person name="Labosky P.A."/>
            <person name="Kaestner K.H."/>
        </authorList>
    </citation>
    <scope>NUCLEOTIDE SEQUENCE [MRNA]</scope>
    <scope>TISSUE SPECIFICITY</scope>
    <source>
        <tissue>Embryo</tissue>
    </source>
</reference>
<reference key="3">
    <citation type="submission" date="2005-01" db="EMBL/GenBank/DDBJ databases">
        <authorList>
            <person name="Kessler D.S."/>
            <person name="Labosky P.A."/>
            <person name="Kaestner K.H."/>
        </authorList>
    </citation>
    <scope>SEQUENCE REVISION</scope>
</reference>
<reference key="4">
    <citation type="journal article" date="2009" name="PLoS Biol.">
        <title>Lineage-specific biology revealed by a finished genome assembly of the mouse.</title>
        <authorList>
            <person name="Church D.M."/>
            <person name="Goodstadt L."/>
            <person name="Hillier L.W."/>
            <person name="Zody M.C."/>
            <person name="Goldstein S."/>
            <person name="She X."/>
            <person name="Bult C.J."/>
            <person name="Agarwala R."/>
            <person name="Cherry J.L."/>
            <person name="DiCuccio M."/>
            <person name="Hlavina W."/>
            <person name="Kapustin Y."/>
            <person name="Meric P."/>
            <person name="Maglott D."/>
            <person name="Birtle Z."/>
            <person name="Marques A.C."/>
            <person name="Graves T."/>
            <person name="Zhou S."/>
            <person name="Teague B."/>
            <person name="Potamousis K."/>
            <person name="Churas C."/>
            <person name="Place M."/>
            <person name="Herschleb J."/>
            <person name="Runnheim R."/>
            <person name="Forrest D."/>
            <person name="Amos-Landgraf J."/>
            <person name="Schwartz D.C."/>
            <person name="Cheng Z."/>
            <person name="Lindblad-Toh K."/>
            <person name="Eichler E.E."/>
            <person name="Ponting C.P."/>
        </authorList>
    </citation>
    <scope>NUCLEOTIDE SEQUENCE [LARGE SCALE GENOMIC DNA]</scope>
    <source>
        <strain>C57BL/6J</strain>
    </source>
</reference>
<reference key="5">
    <citation type="journal article" date="2002" name="Genes Dev.">
        <title>Requirement for Foxd3 in maintaining pluripotent cells of the early mouse embryo.</title>
        <authorList>
            <person name="Hanna L.A."/>
            <person name="Foreman R.K."/>
            <person name="Tarasenko I.A."/>
            <person name="Kessler D.S."/>
            <person name="Labosky P.A."/>
        </authorList>
    </citation>
    <scope>FUNCTION</scope>
    <scope>DEVELOPMENTAL STAGE</scope>
</reference>
<reference key="6">
    <citation type="journal article" date="2001" name="Development">
        <title>The winged-helix transcription factor Foxd3 suppresses interneuron differentiation and promotes neural crest cell fate.</title>
        <authorList>
            <person name="Dottori M."/>
            <person name="Gross M.K."/>
            <person name="Labosky P."/>
            <person name="Goulding M."/>
        </authorList>
    </citation>
    <scope>TISSUE SPECIFICITY</scope>
</reference>
<proteinExistence type="evidence at transcript level"/>
<protein>
    <recommendedName>
        <fullName>Forkhead box protein D3</fullName>
    </recommendedName>
    <alternativeName>
        <fullName>HNF3/FH transcription factor genesis</fullName>
    </alternativeName>
    <alternativeName>
        <fullName>Hepatocyte nuclear factor 3 forkhead homolog 2</fullName>
        <shortName>HFH-2</shortName>
    </alternativeName>
</protein>
<comment type="function">
    <text evidence="1 5 6">Binds to the consensus sequence 5'-A[AT]T[AG]TTTGTTT-3' and acts as a transcriptional repressor (PubMed:12381664, PubMed:8798505). Also acts as a transcriptional activator (PubMed:12381664, PubMed:8798505). Negatively regulates transcription of transcriptional repressor Rhit/Zfp13 (By similarity). Promotes development of neural crest cells from neural tube progenitors (PubMed:12381664, PubMed:8798505). Restricts neural progenitor cells to the neural crest lineage while suppressing interneuron differentiation (PubMed:12381664, PubMed:8798505). Required for maintenance of pluripotent cells in the pre-implantation and peri-implantation stages of embryogenesis (PubMed:12381664, PubMed:8798505).</text>
</comment>
<comment type="subunit">
    <text evidence="1">Interacts with POU5F1.</text>
</comment>
<comment type="subcellular location">
    <subcellularLocation>
        <location evidence="8">Nucleus</location>
    </subcellularLocation>
</comment>
<comment type="tissue specificity">
    <text evidence="4 7">Expressed in premigratory and migrating neural crest cells in the early embryo and in motorneuron and interneuron progenitors in the developing spinal cord.</text>
</comment>
<comment type="developmental stage">
    <text evidence="5">During early embryogenesis, not expressed in unfertilized oocytes or fertilized one-cell embryos but detected in blastocysts.</text>
</comment>
<comment type="sequence caution" evidence="8">
    <conflict type="frameshift">
        <sequence resource="EMBL-CDS" id="AAA87569"/>
    </conflict>
</comment>
<keyword id="KW-0010">Activator</keyword>
<keyword id="KW-0217">Developmental protein</keyword>
<keyword id="KW-0238">DNA-binding</keyword>
<keyword id="KW-0539">Nucleus</keyword>
<keyword id="KW-1185">Reference proteome</keyword>
<keyword id="KW-0678">Repressor</keyword>
<keyword id="KW-0804">Transcription</keyword>
<keyword id="KW-0805">Transcription regulation</keyword>